<gene>
    <name evidence="1" type="primary">uppP</name>
    <name type="ordered locus">Ppha_2250</name>
</gene>
<proteinExistence type="inferred from homology"/>
<protein>
    <recommendedName>
        <fullName evidence="1">Undecaprenyl-diphosphatase</fullName>
        <ecNumber evidence="1">3.6.1.27</ecNumber>
    </recommendedName>
    <alternativeName>
        <fullName evidence="1">Bacitracin resistance protein</fullName>
    </alternativeName>
    <alternativeName>
        <fullName evidence="1">Undecaprenyl pyrophosphate phosphatase</fullName>
    </alternativeName>
</protein>
<keyword id="KW-0046">Antibiotic resistance</keyword>
<keyword id="KW-0997">Cell inner membrane</keyword>
<keyword id="KW-1003">Cell membrane</keyword>
<keyword id="KW-0133">Cell shape</keyword>
<keyword id="KW-0961">Cell wall biogenesis/degradation</keyword>
<keyword id="KW-0378">Hydrolase</keyword>
<keyword id="KW-0472">Membrane</keyword>
<keyword id="KW-0573">Peptidoglycan synthesis</keyword>
<keyword id="KW-1185">Reference proteome</keyword>
<keyword id="KW-0812">Transmembrane</keyword>
<keyword id="KW-1133">Transmembrane helix</keyword>
<sequence>MTLFEAIVLGIVQGLTEFLPISSTAHLRIIPALAGWEDPGAAFTAIVQIGTLVAVLLYFWKDIFIIVAAVIEGIVQRKPLENSDAKMGWMIVAGTIPIVIFGKLFETQIDTTLRSLYWISGSLIGLAIILFLAEGKIKNRIKKELPLKAMENIGWKEALLIGLAQSIALIPGSSRSGVTITGGLFLNLDRATAARFSFLLSLPAVFAAGLYKLYQTWDIIVASPEHITNILVATLVAGIVGYASIAFLLNYLKKHTTTIFIAYRLVAGTAILYLVATGVLQP</sequence>
<evidence type="ECO:0000255" key="1">
    <source>
        <dbReference type="HAMAP-Rule" id="MF_01006"/>
    </source>
</evidence>
<name>UPPP_PELPB</name>
<feature type="chain" id="PRO_1000197386" description="Undecaprenyl-diphosphatase">
    <location>
        <begin position="1"/>
        <end position="282"/>
    </location>
</feature>
<feature type="transmembrane region" description="Helical" evidence="1">
    <location>
        <begin position="51"/>
        <end position="71"/>
    </location>
</feature>
<feature type="transmembrane region" description="Helical" evidence="1">
    <location>
        <begin position="87"/>
        <end position="107"/>
    </location>
</feature>
<feature type="transmembrane region" description="Helical" evidence="1">
    <location>
        <begin position="115"/>
        <end position="135"/>
    </location>
</feature>
<feature type="transmembrane region" description="Helical" evidence="1">
    <location>
        <begin position="191"/>
        <end position="211"/>
    </location>
</feature>
<feature type="transmembrane region" description="Helical" evidence="1">
    <location>
        <begin position="229"/>
        <end position="249"/>
    </location>
</feature>
<feature type="transmembrane region" description="Helical" evidence="1">
    <location>
        <begin position="259"/>
        <end position="279"/>
    </location>
</feature>
<accession>B4SDS7</accession>
<dbReference type="EC" id="3.6.1.27" evidence="1"/>
<dbReference type="EMBL" id="CP001110">
    <property type="protein sequence ID" value="ACF44445.1"/>
    <property type="molecule type" value="Genomic_DNA"/>
</dbReference>
<dbReference type="RefSeq" id="WP_012508921.1">
    <property type="nucleotide sequence ID" value="NC_011060.1"/>
</dbReference>
<dbReference type="SMR" id="B4SDS7"/>
<dbReference type="STRING" id="324925.Ppha_2250"/>
<dbReference type="KEGG" id="pph:Ppha_2250"/>
<dbReference type="eggNOG" id="COG1968">
    <property type="taxonomic scope" value="Bacteria"/>
</dbReference>
<dbReference type="HOGENOM" id="CLU_060296_1_0_10"/>
<dbReference type="OrthoDB" id="9808289at2"/>
<dbReference type="Proteomes" id="UP000002724">
    <property type="component" value="Chromosome"/>
</dbReference>
<dbReference type="GO" id="GO:0005886">
    <property type="term" value="C:plasma membrane"/>
    <property type="evidence" value="ECO:0007669"/>
    <property type="project" value="UniProtKB-SubCell"/>
</dbReference>
<dbReference type="GO" id="GO:0050380">
    <property type="term" value="F:undecaprenyl-diphosphatase activity"/>
    <property type="evidence" value="ECO:0007669"/>
    <property type="project" value="UniProtKB-UniRule"/>
</dbReference>
<dbReference type="GO" id="GO:0071555">
    <property type="term" value="P:cell wall organization"/>
    <property type="evidence" value="ECO:0007669"/>
    <property type="project" value="UniProtKB-KW"/>
</dbReference>
<dbReference type="GO" id="GO:0009252">
    <property type="term" value="P:peptidoglycan biosynthetic process"/>
    <property type="evidence" value="ECO:0007669"/>
    <property type="project" value="UniProtKB-KW"/>
</dbReference>
<dbReference type="GO" id="GO:0008360">
    <property type="term" value="P:regulation of cell shape"/>
    <property type="evidence" value="ECO:0007669"/>
    <property type="project" value="UniProtKB-KW"/>
</dbReference>
<dbReference type="GO" id="GO:0046677">
    <property type="term" value="P:response to antibiotic"/>
    <property type="evidence" value="ECO:0007669"/>
    <property type="project" value="UniProtKB-UniRule"/>
</dbReference>
<dbReference type="HAMAP" id="MF_01006">
    <property type="entry name" value="Undec_diphosphatase"/>
    <property type="match status" value="1"/>
</dbReference>
<dbReference type="InterPro" id="IPR003824">
    <property type="entry name" value="UppP"/>
</dbReference>
<dbReference type="NCBIfam" id="TIGR00753">
    <property type="entry name" value="undec_PP_bacA"/>
    <property type="match status" value="1"/>
</dbReference>
<dbReference type="PANTHER" id="PTHR30622">
    <property type="entry name" value="UNDECAPRENYL-DIPHOSPHATASE"/>
    <property type="match status" value="1"/>
</dbReference>
<dbReference type="PANTHER" id="PTHR30622:SF4">
    <property type="entry name" value="UNDECAPRENYL-DIPHOSPHATASE"/>
    <property type="match status" value="1"/>
</dbReference>
<dbReference type="Pfam" id="PF02673">
    <property type="entry name" value="BacA"/>
    <property type="match status" value="1"/>
</dbReference>
<reference key="1">
    <citation type="submission" date="2008-06" db="EMBL/GenBank/DDBJ databases">
        <title>Complete sequence of Pelodictyon phaeoclathratiforme BU-1.</title>
        <authorList>
            <consortium name="US DOE Joint Genome Institute"/>
            <person name="Lucas S."/>
            <person name="Copeland A."/>
            <person name="Lapidus A."/>
            <person name="Glavina del Rio T."/>
            <person name="Dalin E."/>
            <person name="Tice H."/>
            <person name="Bruce D."/>
            <person name="Goodwin L."/>
            <person name="Pitluck S."/>
            <person name="Schmutz J."/>
            <person name="Larimer F."/>
            <person name="Land M."/>
            <person name="Hauser L."/>
            <person name="Kyrpides N."/>
            <person name="Mikhailova N."/>
            <person name="Liu Z."/>
            <person name="Li T."/>
            <person name="Zhao F."/>
            <person name="Overmann J."/>
            <person name="Bryant D.A."/>
            <person name="Richardson P."/>
        </authorList>
    </citation>
    <scope>NUCLEOTIDE SEQUENCE [LARGE SCALE GENOMIC DNA]</scope>
    <source>
        <strain>DSM 5477 / BU-1</strain>
    </source>
</reference>
<comment type="function">
    <text evidence="1">Catalyzes the dephosphorylation of undecaprenyl diphosphate (UPP). Confers resistance to bacitracin.</text>
</comment>
<comment type="catalytic activity">
    <reaction evidence="1">
        <text>di-trans,octa-cis-undecaprenyl diphosphate + H2O = di-trans,octa-cis-undecaprenyl phosphate + phosphate + H(+)</text>
        <dbReference type="Rhea" id="RHEA:28094"/>
        <dbReference type="ChEBI" id="CHEBI:15377"/>
        <dbReference type="ChEBI" id="CHEBI:15378"/>
        <dbReference type="ChEBI" id="CHEBI:43474"/>
        <dbReference type="ChEBI" id="CHEBI:58405"/>
        <dbReference type="ChEBI" id="CHEBI:60392"/>
        <dbReference type="EC" id="3.6.1.27"/>
    </reaction>
</comment>
<comment type="subcellular location">
    <subcellularLocation>
        <location evidence="1">Cell inner membrane</location>
        <topology evidence="1">Multi-pass membrane protein</topology>
    </subcellularLocation>
</comment>
<comment type="miscellaneous">
    <text>Bacitracin is thought to be involved in the inhibition of peptidoglycan synthesis by sequestering undecaprenyl diphosphate, thereby reducing the pool of lipid carrier available.</text>
</comment>
<comment type="similarity">
    <text evidence="1">Belongs to the UppP family.</text>
</comment>
<organism>
    <name type="scientific">Pelodictyon phaeoclathratiforme (strain DSM 5477 / BU-1)</name>
    <dbReference type="NCBI Taxonomy" id="324925"/>
    <lineage>
        <taxon>Bacteria</taxon>
        <taxon>Pseudomonadati</taxon>
        <taxon>Chlorobiota</taxon>
        <taxon>Chlorobiia</taxon>
        <taxon>Chlorobiales</taxon>
        <taxon>Chlorobiaceae</taxon>
        <taxon>Chlorobium/Pelodictyon group</taxon>
        <taxon>Pelodictyon</taxon>
    </lineage>
</organism>